<name>KDSA_SALA4</name>
<proteinExistence type="inferred from homology"/>
<reference key="1">
    <citation type="journal article" date="2011" name="J. Bacteriol.">
        <title>Comparative genomics of 28 Salmonella enterica isolates: evidence for CRISPR-mediated adaptive sublineage evolution.</title>
        <authorList>
            <person name="Fricke W.F."/>
            <person name="Mammel M.K."/>
            <person name="McDermott P.F."/>
            <person name="Tartera C."/>
            <person name="White D.G."/>
            <person name="Leclerc J.E."/>
            <person name="Ravel J."/>
            <person name="Cebula T.A."/>
        </authorList>
    </citation>
    <scope>NUCLEOTIDE SEQUENCE [LARGE SCALE GENOMIC DNA]</scope>
    <source>
        <strain>SL483</strain>
    </source>
</reference>
<gene>
    <name evidence="1" type="primary">kdsA</name>
    <name type="ordered locus">SeAg_B1367</name>
</gene>
<accession>B5F4I0</accession>
<keyword id="KW-0963">Cytoplasm</keyword>
<keyword id="KW-0448">Lipopolysaccharide biosynthesis</keyword>
<keyword id="KW-0808">Transferase</keyword>
<organism>
    <name type="scientific">Salmonella agona (strain SL483)</name>
    <dbReference type="NCBI Taxonomy" id="454166"/>
    <lineage>
        <taxon>Bacteria</taxon>
        <taxon>Pseudomonadati</taxon>
        <taxon>Pseudomonadota</taxon>
        <taxon>Gammaproteobacteria</taxon>
        <taxon>Enterobacterales</taxon>
        <taxon>Enterobacteriaceae</taxon>
        <taxon>Salmonella</taxon>
    </lineage>
</organism>
<evidence type="ECO:0000255" key="1">
    <source>
        <dbReference type="HAMAP-Rule" id="MF_00056"/>
    </source>
</evidence>
<protein>
    <recommendedName>
        <fullName evidence="1">2-dehydro-3-deoxyphosphooctonate aldolase</fullName>
        <ecNumber evidence="1">2.5.1.55</ecNumber>
    </recommendedName>
    <alternativeName>
        <fullName evidence="1">3-deoxy-D-manno-octulosonic acid 8-phosphate synthase</fullName>
    </alternativeName>
    <alternativeName>
        <fullName evidence="1">KDO-8-phosphate synthase</fullName>
        <shortName evidence="1">KDO 8-P synthase</shortName>
        <shortName evidence="1">KDOPS</shortName>
    </alternativeName>
    <alternativeName>
        <fullName evidence="1">Phospho-2-dehydro-3-deoxyoctonate aldolase</fullName>
    </alternativeName>
</protein>
<comment type="catalytic activity">
    <reaction evidence="1">
        <text>D-arabinose 5-phosphate + phosphoenolpyruvate + H2O = 3-deoxy-alpha-D-manno-2-octulosonate-8-phosphate + phosphate</text>
        <dbReference type="Rhea" id="RHEA:14053"/>
        <dbReference type="ChEBI" id="CHEBI:15377"/>
        <dbReference type="ChEBI" id="CHEBI:43474"/>
        <dbReference type="ChEBI" id="CHEBI:57693"/>
        <dbReference type="ChEBI" id="CHEBI:58702"/>
        <dbReference type="ChEBI" id="CHEBI:85985"/>
        <dbReference type="EC" id="2.5.1.55"/>
    </reaction>
</comment>
<comment type="pathway">
    <text evidence="1">Carbohydrate biosynthesis; 3-deoxy-D-manno-octulosonate biosynthesis; 3-deoxy-D-manno-octulosonate from D-ribulose 5-phosphate: step 2/3.</text>
</comment>
<comment type="pathway">
    <text evidence="1">Bacterial outer membrane biogenesis; lipopolysaccharide biosynthesis.</text>
</comment>
<comment type="subcellular location">
    <subcellularLocation>
        <location evidence="1">Cytoplasm</location>
    </subcellularLocation>
</comment>
<comment type="similarity">
    <text evidence="1">Belongs to the KdsA family.</text>
</comment>
<dbReference type="EC" id="2.5.1.55" evidence="1"/>
<dbReference type="EMBL" id="CP001138">
    <property type="protein sequence ID" value="ACH49517.1"/>
    <property type="molecule type" value="Genomic_DNA"/>
</dbReference>
<dbReference type="RefSeq" id="WP_000811046.1">
    <property type="nucleotide sequence ID" value="NC_011149.1"/>
</dbReference>
<dbReference type="SMR" id="B5F4I0"/>
<dbReference type="KEGG" id="sea:SeAg_B1367"/>
<dbReference type="HOGENOM" id="CLU_036666_0_0_6"/>
<dbReference type="UniPathway" id="UPA00030"/>
<dbReference type="UniPathway" id="UPA00357">
    <property type="reaction ID" value="UER00474"/>
</dbReference>
<dbReference type="Proteomes" id="UP000008819">
    <property type="component" value="Chromosome"/>
</dbReference>
<dbReference type="GO" id="GO:0005737">
    <property type="term" value="C:cytoplasm"/>
    <property type="evidence" value="ECO:0007669"/>
    <property type="project" value="UniProtKB-SubCell"/>
</dbReference>
<dbReference type="GO" id="GO:0008676">
    <property type="term" value="F:3-deoxy-8-phosphooctulonate synthase activity"/>
    <property type="evidence" value="ECO:0007669"/>
    <property type="project" value="UniProtKB-UniRule"/>
</dbReference>
<dbReference type="GO" id="GO:0019294">
    <property type="term" value="P:keto-3-deoxy-D-manno-octulosonic acid biosynthetic process"/>
    <property type="evidence" value="ECO:0007669"/>
    <property type="project" value="UniProtKB-UniRule"/>
</dbReference>
<dbReference type="FunFam" id="3.20.20.70:FF:000058">
    <property type="entry name" value="2-dehydro-3-deoxyphosphooctonate aldolase"/>
    <property type="match status" value="1"/>
</dbReference>
<dbReference type="Gene3D" id="3.20.20.70">
    <property type="entry name" value="Aldolase class I"/>
    <property type="match status" value="1"/>
</dbReference>
<dbReference type="HAMAP" id="MF_00056">
    <property type="entry name" value="KDO8P_synth"/>
    <property type="match status" value="1"/>
</dbReference>
<dbReference type="InterPro" id="IPR013785">
    <property type="entry name" value="Aldolase_TIM"/>
</dbReference>
<dbReference type="InterPro" id="IPR006218">
    <property type="entry name" value="DAHP1/KDSA"/>
</dbReference>
<dbReference type="InterPro" id="IPR006269">
    <property type="entry name" value="KDO8P_synthase"/>
</dbReference>
<dbReference type="NCBIfam" id="TIGR01362">
    <property type="entry name" value="KDO8P_synth"/>
    <property type="match status" value="1"/>
</dbReference>
<dbReference type="NCBIfam" id="NF003543">
    <property type="entry name" value="PRK05198.1"/>
    <property type="match status" value="1"/>
</dbReference>
<dbReference type="NCBIfam" id="NF009109">
    <property type="entry name" value="PRK12457.1"/>
    <property type="match status" value="1"/>
</dbReference>
<dbReference type="PANTHER" id="PTHR21057">
    <property type="entry name" value="PHOSPHO-2-DEHYDRO-3-DEOXYHEPTONATE ALDOLASE"/>
    <property type="match status" value="1"/>
</dbReference>
<dbReference type="Pfam" id="PF00793">
    <property type="entry name" value="DAHP_synth_1"/>
    <property type="match status" value="1"/>
</dbReference>
<dbReference type="SUPFAM" id="SSF51569">
    <property type="entry name" value="Aldolase"/>
    <property type="match status" value="1"/>
</dbReference>
<sequence>MKQKVVNIGDIKVANDLPFVLFGGMNVLESRDLAMRICEHYVTVTQKLGIPYVFKASFDKANRSSIHSYRGPGLEEGMKIFQELKQTFGVKVITDVHEASQAQPVADVVDVIQLPAFLARQTDLVEAMAKTGAVINVKKPQFVSPGQMGNIVDKFHEGGNDKVILCDRGANFGYDNLVVDMLGFSVMKKVSGNSPVIFDVTHALQCRDPFGAASGGRRGQVTELARAGMAVGLAGLFLESHPDPANAKCDGPSALPLAKLEQFLTQIKAIDDLVKSFDELDTEN</sequence>
<feature type="chain" id="PRO_1000091829" description="2-dehydro-3-deoxyphosphooctonate aldolase">
    <location>
        <begin position="1"/>
        <end position="284"/>
    </location>
</feature>